<evidence type="ECO:0000250" key="1">
    <source>
        <dbReference type="UniProtKB" id="P08839"/>
    </source>
</evidence>
<evidence type="ECO:0000250" key="2">
    <source>
        <dbReference type="UniProtKB" id="P23533"/>
    </source>
</evidence>
<evidence type="ECO:0000250" key="3">
    <source>
        <dbReference type="UniProtKB" id="P45597"/>
    </source>
</evidence>
<evidence type="ECO:0000255" key="4">
    <source>
        <dbReference type="PROSITE-ProRule" id="PRU00417"/>
    </source>
</evidence>
<evidence type="ECO:0000255" key="5">
    <source>
        <dbReference type="PROSITE-ProRule" id="PRU00681"/>
    </source>
</evidence>
<evidence type="ECO:0000303" key="6">
    <source>
    </source>
</evidence>
<evidence type="ECO:0000305" key="7"/>
<evidence type="ECO:0000305" key="8">
    <source>
    </source>
</evidence>
<sequence length="827" mass="86394">MIPLTSELVAIGKTATDKADAIAQAVDLLTAAGKIDPRYGQSMMGREAVANTFLGNGIAIPHGLPQDRDLIHDTAIAVVQLPAGVEWAPGDTARLVVAIAAKSDEHLQVLSNLTDVLGDEAEAERLATTLDAAVIVARLTGAAAPVAAPAETPADFAQGIDVVVTGAHGLHARPATTLVDLAKGFAAEIRIRNGAKVANGKSLISLLNLGAAQGAALRISAEGADATAALAAIAAAFEAGLEDEEDTGAAAPEAATPGLTGAGASMASYEGRTLVGISSSPGYALAPVFRFARDEVVFDTDAADAAFETDRLDTALQTAWHELEELHDEVWKTSGPARAAIFRAHQEFLHDPEMVAEAKALIGQGRSAGFAWHRVFSDRADMLGAMKDAVLSGRAIDLRDAGQRVLQHLGRVRTGETHLPTAPCILLADDLTPSDTARLDPALVRGLATAQGGPTSHTSIIARALDIPAVAGVGPRLLDLATGTPVLLDGGAGVIVVAPTEADKARAETAMAALTAQRELEARERYKPALTVDGARVEVVANISDVAEAIASVEAGAEGVGLLRTEFLFVNREAPPGEDEQLAIYAAMLSALNGLPIIIRTLDVGGDKEIPYLRMPVEQNPFLGERGIRFCLSHEDLFRTQLRAIYRASAGGQVRIMFPMIAMIEELETARRIAEEVRLEVGAAPVEIGIMIEIPSAVMMAPELAKRVDFFSIGTNDLTQYALAMDRMHPVLAKQADGLHPAVLRLIDSTVRAAEAARIWVGACGGIAGDPVGAAVLSGLGVRELSVSIPAVAGIKAQLRHSAMAENRDLARRALACTTAAEVRGLK</sequence>
<feature type="chain" id="PRO_0000186512" description="Multiphosphoryl transfer protein">
    <location>
        <begin position="1"/>
        <end position="827"/>
    </location>
</feature>
<feature type="domain" description="PTS EIIA type-2" evidence="4 8">
    <location>
        <begin position="2"/>
        <end position="142"/>
    </location>
</feature>
<feature type="domain" description="HPr" evidence="5 8">
    <location>
        <begin position="157"/>
        <end position="245"/>
    </location>
</feature>
<feature type="region of interest" description="PTS EI" evidence="8">
    <location>
        <begin position="270"/>
        <end position="827"/>
    </location>
</feature>
<feature type="active site" description="Tele-phosphohistidine intermediate; for EIIA activity" evidence="4 8">
    <location>
        <position position="62"/>
    </location>
</feature>
<feature type="active site" description="Pros-phosphohistidine intermediate; for HPr activity" evidence="5 8">
    <location>
        <position position="171"/>
    </location>
</feature>
<feature type="active site" description="Tele-phosphohistidine intermediate; for PTS EI activity" evidence="1 4 8">
    <location>
        <position position="457"/>
    </location>
</feature>
<feature type="active site" description="Proton donor" evidence="1">
    <location>
        <position position="764"/>
    </location>
</feature>
<feature type="binding site" evidence="2">
    <location>
        <position position="564"/>
    </location>
    <ligand>
        <name>phosphoenolpyruvate</name>
        <dbReference type="ChEBI" id="CHEBI:58702"/>
    </ligand>
</feature>
<feature type="binding site" evidence="1">
    <location>
        <position position="600"/>
    </location>
    <ligand>
        <name>phosphoenolpyruvate</name>
        <dbReference type="ChEBI" id="CHEBI:58702"/>
    </ligand>
</feature>
<feature type="binding site" evidence="1">
    <location>
        <position position="693"/>
    </location>
    <ligand>
        <name>Mg(2+)</name>
        <dbReference type="ChEBI" id="CHEBI:18420"/>
    </ligand>
</feature>
<feature type="binding site" evidence="1">
    <location>
        <begin position="716"/>
        <end position="717"/>
    </location>
    <ligand>
        <name>phosphoenolpyruvate</name>
        <dbReference type="ChEBI" id="CHEBI:58702"/>
    </ligand>
</feature>
<feature type="binding site" evidence="1">
    <location>
        <position position="717"/>
    </location>
    <ligand>
        <name>Mg(2+)</name>
        <dbReference type="ChEBI" id="CHEBI:18420"/>
    </ligand>
</feature>
<feature type="binding site" evidence="2">
    <location>
        <position position="727"/>
    </location>
    <ligand>
        <name>phosphoenolpyruvate</name>
        <dbReference type="ChEBI" id="CHEBI:58702"/>
    </ligand>
</feature>
<feature type="modified residue" description="Phosphohistidine; by HPr" evidence="7">
    <location>
        <position position="62"/>
    </location>
</feature>
<feature type="modified residue" description="Phosphohistidine; by EI" evidence="7">
    <location>
        <position position="171"/>
    </location>
</feature>
<feature type="modified residue" description="Phosphohistidine; by autocatalysis" evidence="7">
    <location>
        <position position="457"/>
    </location>
</feature>
<accession>P23388</accession>
<protein>
    <recommendedName>
        <fullName evidence="6">Multiphosphoryl transfer protein</fullName>
        <shortName evidence="6">MTP</shortName>
    </recommendedName>
    <alternativeName>
        <fullName evidence="7">Triphosphoryl transfer protein</fullName>
        <shortName evidence="7">TTP</shortName>
    </alternativeName>
    <domain>
        <recommendedName>
            <fullName evidence="6">Phosphoenolpyruvate-protein phosphotransferase</fullName>
            <ecNumber evidence="1">2.7.3.9</ecNumber>
        </recommendedName>
        <alternativeName>
            <fullName evidence="6">Phosphotransferase system enzyme I</fullName>
        </alternativeName>
    </domain>
    <domain>
        <recommendedName>
            <fullName evidence="6">Phosphocarrier protein HPr</fullName>
            <shortName evidence="6">Protein H</shortName>
        </recommendedName>
    </domain>
    <domain>
        <recommendedName>
            <fullName evidence="6">PTS system fructose-specific EIIA component</fullName>
        </recommendedName>
        <alternativeName>
            <fullName evidence="6">EIII-Fru</fullName>
        </alternativeName>
        <alternativeName>
            <fullName evidence="6">Fructose-specific phosphotransferase enzyme IIA component</fullName>
        </alternativeName>
    </domain>
</protein>
<reference key="1">
    <citation type="journal article" date="1990" name="J. Mol. Biol.">
        <title>Structure and evolution of a multidomain multiphosphoryl transfer protein. Nucleotide sequence of the fruB(HI) gene in Rhodobacter capsulatus and comparisons with homologous genes from other organisms.</title>
        <authorList>
            <person name="Wu L.-F."/>
            <person name="Tomich J.M."/>
            <person name="Saier M.H. Jr."/>
        </authorList>
    </citation>
    <scope>NUCLEOTIDE SEQUENCE [GENOMIC DNA]</scope>
    <source>
        <strain>DSM 938 / 37b4</strain>
    </source>
</reference>
<dbReference type="EC" id="2.7.3.9" evidence="1"/>
<dbReference type="EMBL" id="X53150">
    <property type="protein sequence ID" value="CAA37301.1"/>
    <property type="molecule type" value="Genomic_DNA"/>
</dbReference>
<dbReference type="PIR" id="S10639">
    <property type="entry name" value="S10639"/>
</dbReference>
<dbReference type="SMR" id="P23388"/>
<dbReference type="OMA" id="NTFLGHG"/>
<dbReference type="GO" id="GO:0005737">
    <property type="term" value="C:cytoplasm"/>
    <property type="evidence" value="ECO:0007669"/>
    <property type="project" value="UniProtKB-SubCell"/>
</dbReference>
<dbReference type="GO" id="GO:0016301">
    <property type="term" value="F:kinase activity"/>
    <property type="evidence" value="ECO:0007669"/>
    <property type="project" value="UniProtKB-KW"/>
</dbReference>
<dbReference type="GO" id="GO:0046872">
    <property type="term" value="F:metal ion binding"/>
    <property type="evidence" value="ECO:0007669"/>
    <property type="project" value="UniProtKB-KW"/>
</dbReference>
<dbReference type="GO" id="GO:0008965">
    <property type="term" value="F:phosphoenolpyruvate-protein phosphotransferase activity"/>
    <property type="evidence" value="ECO:0007669"/>
    <property type="project" value="UniProtKB-EC"/>
</dbReference>
<dbReference type="GO" id="GO:0009401">
    <property type="term" value="P:phosphoenolpyruvate-dependent sugar phosphotransferase system"/>
    <property type="evidence" value="ECO:0007669"/>
    <property type="project" value="UniProtKB-KW"/>
</dbReference>
<dbReference type="CDD" id="cd00367">
    <property type="entry name" value="PTS-HPr_like"/>
    <property type="match status" value="1"/>
</dbReference>
<dbReference type="CDD" id="cd00211">
    <property type="entry name" value="PTS_IIA_fru"/>
    <property type="match status" value="1"/>
</dbReference>
<dbReference type="Gene3D" id="3.30.1340.10">
    <property type="entry name" value="HPr-like"/>
    <property type="match status" value="1"/>
</dbReference>
<dbReference type="Gene3D" id="3.40.930.10">
    <property type="entry name" value="Mannitol-specific EII, Chain A"/>
    <property type="match status" value="1"/>
</dbReference>
<dbReference type="Gene3D" id="3.20.20.60">
    <property type="entry name" value="Phosphoenolpyruvate-binding domains"/>
    <property type="match status" value="1"/>
</dbReference>
<dbReference type="Gene3D" id="3.50.30.10">
    <property type="entry name" value="Phosphohistidine domain"/>
    <property type="match status" value="1"/>
</dbReference>
<dbReference type="Gene3D" id="1.10.274.10">
    <property type="entry name" value="PtsI, HPr-binding domain"/>
    <property type="match status" value="1"/>
</dbReference>
<dbReference type="InterPro" id="IPR000032">
    <property type="entry name" value="HPr-like"/>
</dbReference>
<dbReference type="InterPro" id="IPR035895">
    <property type="entry name" value="HPr-like_sf"/>
</dbReference>
<dbReference type="InterPro" id="IPR008279">
    <property type="entry name" value="PEP-util_enz_mobile_dom"/>
</dbReference>
<dbReference type="InterPro" id="IPR050499">
    <property type="entry name" value="PEP-utilizing_PTS_enzyme"/>
</dbReference>
<dbReference type="InterPro" id="IPR018274">
    <property type="entry name" value="PEP_util_AS"/>
</dbReference>
<dbReference type="InterPro" id="IPR000121">
    <property type="entry name" value="PEP_util_C"/>
</dbReference>
<dbReference type="InterPro" id="IPR023151">
    <property type="entry name" value="PEP_util_CS"/>
</dbReference>
<dbReference type="InterPro" id="IPR036637">
    <property type="entry name" value="Phosphohistidine_dom_sf"/>
</dbReference>
<dbReference type="InterPro" id="IPR016152">
    <property type="entry name" value="PTrfase/Anion_transptr"/>
</dbReference>
<dbReference type="InterPro" id="IPR006318">
    <property type="entry name" value="PTS_EI-like"/>
</dbReference>
<dbReference type="InterPro" id="IPR002178">
    <property type="entry name" value="PTS_EIIA_type-2_dom"/>
</dbReference>
<dbReference type="InterPro" id="IPR008731">
    <property type="entry name" value="PTS_EIN"/>
</dbReference>
<dbReference type="InterPro" id="IPR001020">
    <property type="entry name" value="PTS_HPr_His_P_site"/>
</dbReference>
<dbReference type="InterPro" id="IPR002114">
    <property type="entry name" value="PTS_HPr_Ser_P_site"/>
</dbReference>
<dbReference type="InterPro" id="IPR036618">
    <property type="entry name" value="PtsI_HPr-bd_sf"/>
</dbReference>
<dbReference type="InterPro" id="IPR015813">
    <property type="entry name" value="Pyrv/PenolPyrv_kinase-like_dom"/>
</dbReference>
<dbReference type="InterPro" id="IPR040442">
    <property type="entry name" value="Pyrv_kinase-like_dom_sf"/>
</dbReference>
<dbReference type="NCBIfam" id="TIGR01003">
    <property type="entry name" value="PTS_HPr_family"/>
    <property type="match status" value="1"/>
</dbReference>
<dbReference type="NCBIfam" id="TIGR01417">
    <property type="entry name" value="PTS_I_fam"/>
    <property type="match status" value="1"/>
</dbReference>
<dbReference type="PANTHER" id="PTHR46244">
    <property type="entry name" value="PHOSPHOENOLPYRUVATE-PROTEIN PHOSPHOTRANSFERASE"/>
    <property type="match status" value="1"/>
</dbReference>
<dbReference type="PANTHER" id="PTHR46244:SF6">
    <property type="entry name" value="PHOSPHOENOLPYRUVATE-PROTEIN PHOSPHOTRANSFERASE"/>
    <property type="match status" value="1"/>
</dbReference>
<dbReference type="Pfam" id="PF05524">
    <property type="entry name" value="PEP-utilisers_N"/>
    <property type="match status" value="1"/>
</dbReference>
<dbReference type="Pfam" id="PF00391">
    <property type="entry name" value="PEP-utilizers"/>
    <property type="match status" value="1"/>
</dbReference>
<dbReference type="Pfam" id="PF02896">
    <property type="entry name" value="PEP-utilizers_C"/>
    <property type="match status" value="1"/>
</dbReference>
<dbReference type="Pfam" id="PF00381">
    <property type="entry name" value="PTS-HPr"/>
    <property type="match status" value="1"/>
</dbReference>
<dbReference type="Pfam" id="PF00359">
    <property type="entry name" value="PTS_EIIA_2"/>
    <property type="match status" value="1"/>
</dbReference>
<dbReference type="PRINTS" id="PR00107">
    <property type="entry name" value="PHOSPHOCPHPR"/>
</dbReference>
<dbReference type="PRINTS" id="PR01736">
    <property type="entry name" value="PHPHTRNFRASE"/>
</dbReference>
<dbReference type="SUPFAM" id="SSF47831">
    <property type="entry name" value="Enzyme I of the PEP:sugar phosphotransferase system HPr-binding (sub)domain"/>
    <property type="match status" value="1"/>
</dbReference>
<dbReference type="SUPFAM" id="SSF55594">
    <property type="entry name" value="HPr-like"/>
    <property type="match status" value="1"/>
</dbReference>
<dbReference type="SUPFAM" id="SSF55804">
    <property type="entry name" value="Phoshotransferase/anion transport protein"/>
    <property type="match status" value="1"/>
</dbReference>
<dbReference type="SUPFAM" id="SSF51621">
    <property type="entry name" value="Phosphoenolpyruvate/pyruvate domain"/>
    <property type="match status" value="1"/>
</dbReference>
<dbReference type="SUPFAM" id="SSF52009">
    <property type="entry name" value="Phosphohistidine domain"/>
    <property type="match status" value="1"/>
</dbReference>
<dbReference type="PROSITE" id="PS00742">
    <property type="entry name" value="PEP_ENZYMES_2"/>
    <property type="match status" value="1"/>
</dbReference>
<dbReference type="PROSITE" id="PS00370">
    <property type="entry name" value="PEP_ENZYMES_PHOS_SITE"/>
    <property type="match status" value="1"/>
</dbReference>
<dbReference type="PROSITE" id="PS51094">
    <property type="entry name" value="PTS_EIIA_TYPE_2"/>
    <property type="match status" value="1"/>
</dbReference>
<dbReference type="PROSITE" id="PS00372">
    <property type="entry name" value="PTS_EIIA_TYPE_2_HIS"/>
    <property type="match status" value="1"/>
</dbReference>
<dbReference type="PROSITE" id="PS51350">
    <property type="entry name" value="PTS_HPR_DOM"/>
    <property type="match status" value="1"/>
</dbReference>
<dbReference type="PROSITE" id="PS00369">
    <property type="entry name" value="PTS_HPR_HIS"/>
    <property type="match status" value="1"/>
</dbReference>
<dbReference type="PROSITE" id="PS00589">
    <property type="entry name" value="PTS_HPR_SER"/>
    <property type="match status" value="1"/>
</dbReference>
<keyword id="KW-0963">Cytoplasm</keyword>
<keyword id="KW-0418">Kinase</keyword>
<keyword id="KW-0460">Magnesium</keyword>
<keyword id="KW-0479">Metal-binding</keyword>
<keyword id="KW-0597">Phosphoprotein</keyword>
<keyword id="KW-0598">Phosphotransferase system</keyword>
<keyword id="KW-0762">Sugar transport</keyword>
<keyword id="KW-0808">Transferase</keyword>
<keyword id="KW-0813">Transport</keyword>
<organism>
    <name type="scientific">Rhodobacter capsulatus</name>
    <name type="common">Rhodopseudomonas capsulata</name>
    <dbReference type="NCBI Taxonomy" id="1061"/>
    <lineage>
        <taxon>Bacteria</taxon>
        <taxon>Pseudomonadati</taxon>
        <taxon>Pseudomonadota</taxon>
        <taxon>Alphaproteobacteria</taxon>
        <taxon>Rhodobacterales</taxon>
        <taxon>Rhodobacter group</taxon>
        <taxon>Rhodobacter</taxon>
    </lineage>
</organism>
<comment type="function">
    <text evidence="3">The phosphoenolpyruvate-dependent sugar phosphotransferase system (sugar PTS), a major carbohydrate active transport system, catalyzes the phosphorylation of incoming sugar substrates concomitantly with their translocation across the cell membrane. The enzyme II FruAB PTS system is involved in fructose transport.</text>
</comment>
<comment type="catalytic activity">
    <reaction evidence="1">
        <text>L-histidyl-[protein] + phosphoenolpyruvate = N(pros)-phospho-L-histidyl-[protein] + pyruvate</text>
        <dbReference type="Rhea" id="RHEA:23880"/>
        <dbReference type="Rhea" id="RHEA-COMP:9745"/>
        <dbReference type="Rhea" id="RHEA-COMP:9746"/>
        <dbReference type="ChEBI" id="CHEBI:15361"/>
        <dbReference type="ChEBI" id="CHEBI:29979"/>
        <dbReference type="ChEBI" id="CHEBI:58702"/>
        <dbReference type="ChEBI" id="CHEBI:64837"/>
        <dbReference type="EC" id="2.7.3.9"/>
    </reaction>
</comment>
<comment type="cofactor">
    <cofactor evidence="1">
        <name>Mg(2+)</name>
        <dbReference type="ChEBI" id="CHEBI:18420"/>
    </cofactor>
</comment>
<comment type="subcellular location">
    <subcellularLocation>
        <location evidence="7">Cytoplasm</location>
    </subcellularLocation>
</comment>
<comment type="domain">
    <text evidence="4">The PTS EIIA type-2 domain is phosphorylated by phospho-HPr on a histidyl residue. Then, it transfers the phosphoryl group to the PTS EIIB type-2 domain.</text>
</comment>
<comment type="domain">
    <text evidence="7">In contrast to classical PTS systems, the fructose-specific PTS has no requirement for HPr and Enzyme I; FruB combines a IIA domain with an Enzyme I and a HPr domains.</text>
</comment>
<comment type="similarity">
    <text evidence="7">Belongs to the PEP-utilizing enzyme family.</text>
</comment>
<gene>
    <name evidence="6" type="primary">fruB(HI)</name>
</gene>
<name>PTFAX_RHOCA</name>
<proteinExistence type="inferred from homology"/>